<gene>
    <name evidence="1" type="primary">proB</name>
    <name type="ordered locus">EC55989_0266</name>
</gene>
<evidence type="ECO:0000255" key="1">
    <source>
        <dbReference type="HAMAP-Rule" id="MF_00456"/>
    </source>
</evidence>
<protein>
    <recommendedName>
        <fullName evidence="1">Glutamate 5-kinase</fullName>
        <ecNumber evidence="1">2.7.2.11</ecNumber>
    </recommendedName>
    <alternativeName>
        <fullName evidence="1">Gamma-glutamyl kinase</fullName>
        <shortName evidence="1">GK</shortName>
    </alternativeName>
</protein>
<feature type="chain" id="PRO_1000193693" description="Glutamate 5-kinase">
    <location>
        <begin position="1"/>
        <end position="367"/>
    </location>
</feature>
<feature type="domain" description="PUA" evidence="1">
    <location>
        <begin position="275"/>
        <end position="353"/>
    </location>
</feature>
<feature type="binding site" evidence="1">
    <location>
        <position position="10"/>
    </location>
    <ligand>
        <name>ATP</name>
        <dbReference type="ChEBI" id="CHEBI:30616"/>
    </ligand>
</feature>
<feature type="binding site" evidence="1">
    <location>
        <position position="50"/>
    </location>
    <ligand>
        <name>substrate</name>
    </ligand>
</feature>
<feature type="binding site" evidence="1">
    <location>
        <position position="137"/>
    </location>
    <ligand>
        <name>substrate</name>
    </ligand>
</feature>
<feature type="binding site" evidence="1">
    <location>
        <position position="149"/>
    </location>
    <ligand>
        <name>substrate</name>
    </ligand>
</feature>
<feature type="binding site" evidence="1">
    <location>
        <begin position="169"/>
        <end position="170"/>
    </location>
    <ligand>
        <name>ATP</name>
        <dbReference type="ChEBI" id="CHEBI:30616"/>
    </ligand>
</feature>
<feature type="binding site" evidence="1">
    <location>
        <begin position="211"/>
        <end position="217"/>
    </location>
    <ligand>
        <name>ATP</name>
        <dbReference type="ChEBI" id="CHEBI:30616"/>
    </ligand>
</feature>
<sequence length="367" mass="39057">MSDSQTLVVKLGTSVLTGGSRRLNRAHIVELVRQCAQLHAAGHRIVIVTSGAIAAGREHLGYPELPATIASKQLLAAVGQSRLIQLWEQLFSIYGIHVGQMLLTRADMEDRERFLNARDTLRALLDNNIVPVINENDAVATAEIKVGDNDNLSALAAILAGADKLLLLTDQKGLYTADPRSNPQAELIKDVYGIDDALRAIAGDSVSGLGTGGMSTKLQAADVACRAGIDTIIAAGSKPGVIGDVMEGISVGTLFHAQATPLENRKRWIFGAPPAGEITVDEGATAAILERGSSLLPKGIKSVTGNFSRGEVIRICNLEGRDIAHGVSRYNSDALRRIAGHHSQEIDAILGYEYGPVAVHRDDMITR</sequence>
<accession>B7L3Z4</accession>
<comment type="function">
    <text evidence="1">Catalyzes the transfer of a phosphate group to glutamate to form L-glutamate 5-phosphate.</text>
</comment>
<comment type="catalytic activity">
    <reaction evidence="1">
        <text>L-glutamate + ATP = L-glutamyl 5-phosphate + ADP</text>
        <dbReference type="Rhea" id="RHEA:14877"/>
        <dbReference type="ChEBI" id="CHEBI:29985"/>
        <dbReference type="ChEBI" id="CHEBI:30616"/>
        <dbReference type="ChEBI" id="CHEBI:58274"/>
        <dbReference type="ChEBI" id="CHEBI:456216"/>
        <dbReference type="EC" id="2.7.2.11"/>
    </reaction>
</comment>
<comment type="pathway">
    <text evidence="1">Amino-acid biosynthesis; L-proline biosynthesis; L-glutamate 5-semialdehyde from L-glutamate: step 1/2.</text>
</comment>
<comment type="subcellular location">
    <subcellularLocation>
        <location evidence="1">Cytoplasm</location>
    </subcellularLocation>
</comment>
<comment type="similarity">
    <text evidence="1">Belongs to the glutamate 5-kinase family.</text>
</comment>
<proteinExistence type="inferred from homology"/>
<reference key="1">
    <citation type="journal article" date="2009" name="PLoS Genet.">
        <title>Organised genome dynamics in the Escherichia coli species results in highly diverse adaptive paths.</title>
        <authorList>
            <person name="Touchon M."/>
            <person name="Hoede C."/>
            <person name="Tenaillon O."/>
            <person name="Barbe V."/>
            <person name="Baeriswyl S."/>
            <person name="Bidet P."/>
            <person name="Bingen E."/>
            <person name="Bonacorsi S."/>
            <person name="Bouchier C."/>
            <person name="Bouvet O."/>
            <person name="Calteau A."/>
            <person name="Chiapello H."/>
            <person name="Clermont O."/>
            <person name="Cruveiller S."/>
            <person name="Danchin A."/>
            <person name="Diard M."/>
            <person name="Dossat C."/>
            <person name="Karoui M.E."/>
            <person name="Frapy E."/>
            <person name="Garry L."/>
            <person name="Ghigo J.M."/>
            <person name="Gilles A.M."/>
            <person name="Johnson J."/>
            <person name="Le Bouguenec C."/>
            <person name="Lescat M."/>
            <person name="Mangenot S."/>
            <person name="Martinez-Jehanne V."/>
            <person name="Matic I."/>
            <person name="Nassif X."/>
            <person name="Oztas S."/>
            <person name="Petit M.A."/>
            <person name="Pichon C."/>
            <person name="Rouy Z."/>
            <person name="Ruf C.S."/>
            <person name="Schneider D."/>
            <person name="Tourret J."/>
            <person name="Vacherie B."/>
            <person name="Vallenet D."/>
            <person name="Medigue C."/>
            <person name="Rocha E.P.C."/>
            <person name="Denamur E."/>
        </authorList>
    </citation>
    <scope>NUCLEOTIDE SEQUENCE [LARGE SCALE GENOMIC DNA]</scope>
    <source>
        <strain>55989 / EAEC</strain>
    </source>
</reference>
<name>PROB_ECO55</name>
<keyword id="KW-0028">Amino-acid biosynthesis</keyword>
<keyword id="KW-0067">ATP-binding</keyword>
<keyword id="KW-0963">Cytoplasm</keyword>
<keyword id="KW-0418">Kinase</keyword>
<keyword id="KW-0547">Nucleotide-binding</keyword>
<keyword id="KW-0641">Proline biosynthesis</keyword>
<keyword id="KW-1185">Reference proteome</keyword>
<keyword id="KW-0808">Transferase</keyword>
<dbReference type="EC" id="2.7.2.11" evidence="1"/>
<dbReference type="EMBL" id="CU928145">
    <property type="protein sequence ID" value="CAU96145.1"/>
    <property type="molecule type" value="Genomic_DNA"/>
</dbReference>
<dbReference type="RefSeq" id="WP_001285288.1">
    <property type="nucleotide sequence ID" value="NZ_CP028304.1"/>
</dbReference>
<dbReference type="SMR" id="B7L3Z4"/>
<dbReference type="GeneID" id="93777151"/>
<dbReference type="KEGG" id="eck:EC55989_0266"/>
<dbReference type="HOGENOM" id="CLU_025400_2_0_6"/>
<dbReference type="UniPathway" id="UPA00098">
    <property type="reaction ID" value="UER00359"/>
</dbReference>
<dbReference type="Proteomes" id="UP000000746">
    <property type="component" value="Chromosome"/>
</dbReference>
<dbReference type="GO" id="GO:0005829">
    <property type="term" value="C:cytosol"/>
    <property type="evidence" value="ECO:0007669"/>
    <property type="project" value="TreeGrafter"/>
</dbReference>
<dbReference type="GO" id="GO:0005524">
    <property type="term" value="F:ATP binding"/>
    <property type="evidence" value="ECO:0007669"/>
    <property type="project" value="UniProtKB-KW"/>
</dbReference>
<dbReference type="GO" id="GO:0004349">
    <property type="term" value="F:glutamate 5-kinase activity"/>
    <property type="evidence" value="ECO:0007669"/>
    <property type="project" value="UniProtKB-UniRule"/>
</dbReference>
<dbReference type="GO" id="GO:0003723">
    <property type="term" value="F:RNA binding"/>
    <property type="evidence" value="ECO:0007669"/>
    <property type="project" value="InterPro"/>
</dbReference>
<dbReference type="GO" id="GO:0055129">
    <property type="term" value="P:L-proline biosynthetic process"/>
    <property type="evidence" value="ECO:0007669"/>
    <property type="project" value="UniProtKB-UniRule"/>
</dbReference>
<dbReference type="CDD" id="cd04242">
    <property type="entry name" value="AAK_G5K_ProB"/>
    <property type="match status" value="1"/>
</dbReference>
<dbReference type="CDD" id="cd21157">
    <property type="entry name" value="PUA_G5K"/>
    <property type="match status" value="1"/>
</dbReference>
<dbReference type="FunFam" id="2.30.130.10:FF:000003">
    <property type="entry name" value="Glutamate 5-kinase"/>
    <property type="match status" value="1"/>
</dbReference>
<dbReference type="FunFam" id="3.40.1160.10:FF:000006">
    <property type="entry name" value="Glutamate 5-kinase"/>
    <property type="match status" value="1"/>
</dbReference>
<dbReference type="Gene3D" id="3.40.1160.10">
    <property type="entry name" value="Acetylglutamate kinase-like"/>
    <property type="match status" value="2"/>
</dbReference>
<dbReference type="Gene3D" id="2.30.130.10">
    <property type="entry name" value="PUA domain"/>
    <property type="match status" value="1"/>
</dbReference>
<dbReference type="HAMAP" id="MF_00456">
    <property type="entry name" value="ProB"/>
    <property type="match status" value="1"/>
</dbReference>
<dbReference type="InterPro" id="IPR036393">
    <property type="entry name" value="AceGlu_kinase-like_sf"/>
</dbReference>
<dbReference type="InterPro" id="IPR001048">
    <property type="entry name" value="Asp/Glu/Uridylate_kinase"/>
</dbReference>
<dbReference type="InterPro" id="IPR041739">
    <property type="entry name" value="G5K_ProB"/>
</dbReference>
<dbReference type="InterPro" id="IPR001057">
    <property type="entry name" value="Glu/AcGlu_kinase"/>
</dbReference>
<dbReference type="InterPro" id="IPR011529">
    <property type="entry name" value="Glu_5kinase"/>
</dbReference>
<dbReference type="InterPro" id="IPR005715">
    <property type="entry name" value="Glu_5kinase/COase_Synthase"/>
</dbReference>
<dbReference type="InterPro" id="IPR019797">
    <property type="entry name" value="Glutamate_5-kinase_CS"/>
</dbReference>
<dbReference type="InterPro" id="IPR002478">
    <property type="entry name" value="PUA"/>
</dbReference>
<dbReference type="InterPro" id="IPR015947">
    <property type="entry name" value="PUA-like_sf"/>
</dbReference>
<dbReference type="InterPro" id="IPR036974">
    <property type="entry name" value="PUA_sf"/>
</dbReference>
<dbReference type="NCBIfam" id="TIGR01027">
    <property type="entry name" value="proB"/>
    <property type="match status" value="1"/>
</dbReference>
<dbReference type="PANTHER" id="PTHR43654">
    <property type="entry name" value="GLUTAMATE 5-KINASE"/>
    <property type="match status" value="1"/>
</dbReference>
<dbReference type="PANTHER" id="PTHR43654:SF1">
    <property type="entry name" value="ISOPENTENYL PHOSPHATE KINASE"/>
    <property type="match status" value="1"/>
</dbReference>
<dbReference type="Pfam" id="PF00696">
    <property type="entry name" value="AA_kinase"/>
    <property type="match status" value="1"/>
</dbReference>
<dbReference type="Pfam" id="PF01472">
    <property type="entry name" value="PUA"/>
    <property type="match status" value="1"/>
</dbReference>
<dbReference type="PIRSF" id="PIRSF000729">
    <property type="entry name" value="GK"/>
    <property type="match status" value="1"/>
</dbReference>
<dbReference type="PRINTS" id="PR00474">
    <property type="entry name" value="GLU5KINASE"/>
</dbReference>
<dbReference type="SMART" id="SM00359">
    <property type="entry name" value="PUA"/>
    <property type="match status" value="1"/>
</dbReference>
<dbReference type="SUPFAM" id="SSF53633">
    <property type="entry name" value="Carbamate kinase-like"/>
    <property type="match status" value="1"/>
</dbReference>
<dbReference type="SUPFAM" id="SSF88697">
    <property type="entry name" value="PUA domain-like"/>
    <property type="match status" value="1"/>
</dbReference>
<dbReference type="PROSITE" id="PS00902">
    <property type="entry name" value="GLUTAMATE_5_KINASE"/>
    <property type="match status" value="1"/>
</dbReference>
<dbReference type="PROSITE" id="PS50890">
    <property type="entry name" value="PUA"/>
    <property type="match status" value="1"/>
</dbReference>
<organism>
    <name type="scientific">Escherichia coli (strain 55989 / EAEC)</name>
    <dbReference type="NCBI Taxonomy" id="585055"/>
    <lineage>
        <taxon>Bacteria</taxon>
        <taxon>Pseudomonadati</taxon>
        <taxon>Pseudomonadota</taxon>
        <taxon>Gammaproteobacteria</taxon>
        <taxon>Enterobacterales</taxon>
        <taxon>Enterobacteriaceae</taxon>
        <taxon>Escherichia</taxon>
    </lineage>
</organism>